<sequence length="398" mass="43413">MKDRVVLAYSGGLDTTVAISWIAKERNAEVVCVSIDLGQGGEDMETVRQRALGAGAVESIVVDARDEFANDYCLPTIKANGMYMKEYPLVSAISRPLIVKHMADAAKEHGGTAVAHGCTGKGNDQVRFEVGFANTAPDLEIIAPVRDYAWTREKAIAFAEENGIPIEQSKSSPFSIDQNVWGRAVETGFLEDLWNAPTKDVYAYTEDPGLGQAPDEVIISFESGVPVAIDGKKVTVLEAIEELNRRAGAQGVGRLDMVEDRLVGIKSREIYEAPGAITLIRAHEALEAVTVERELARYKRGIDAEWSNQVYDGLWFSPLKRSLDAFIDSTQAHVTGDIRLVLHAGSITVNGRRSGKSLYDFNLATYDEGDSFDQSMARGFVELHGLSSKIAAKRDLAN</sequence>
<accession>Q4JVZ8</accession>
<keyword id="KW-0028">Amino-acid biosynthesis</keyword>
<keyword id="KW-0055">Arginine biosynthesis</keyword>
<keyword id="KW-0067">ATP-binding</keyword>
<keyword id="KW-0963">Cytoplasm</keyword>
<keyword id="KW-0436">Ligase</keyword>
<keyword id="KW-0547">Nucleotide-binding</keyword>
<keyword id="KW-1185">Reference proteome</keyword>
<proteinExistence type="inferred from homology"/>
<protein>
    <recommendedName>
        <fullName evidence="1">Argininosuccinate synthase</fullName>
        <ecNumber evidence="1">6.3.4.5</ecNumber>
    </recommendedName>
    <alternativeName>
        <fullName evidence="1">Citrulline--aspartate ligase</fullName>
    </alternativeName>
</protein>
<dbReference type="EC" id="6.3.4.5" evidence="1"/>
<dbReference type="EMBL" id="CR931997">
    <property type="protein sequence ID" value="CAI37009.1"/>
    <property type="molecule type" value="Genomic_DNA"/>
</dbReference>
<dbReference type="RefSeq" id="WP_005295710.1">
    <property type="nucleotide sequence ID" value="NC_007164.1"/>
</dbReference>
<dbReference type="SMR" id="Q4JVZ8"/>
<dbReference type="STRING" id="306537.jk0847"/>
<dbReference type="GeneID" id="92738371"/>
<dbReference type="KEGG" id="cjk:jk0847"/>
<dbReference type="eggNOG" id="COG0137">
    <property type="taxonomic scope" value="Bacteria"/>
</dbReference>
<dbReference type="HOGENOM" id="CLU_032784_4_2_11"/>
<dbReference type="OrthoDB" id="9801641at2"/>
<dbReference type="UniPathway" id="UPA00068">
    <property type="reaction ID" value="UER00113"/>
</dbReference>
<dbReference type="Proteomes" id="UP000000545">
    <property type="component" value="Chromosome"/>
</dbReference>
<dbReference type="GO" id="GO:0005737">
    <property type="term" value="C:cytoplasm"/>
    <property type="evidence" value="ECO:0007669"/>
    <property type="project" value="UniProtKB-SubCell"/>
</dbReference>
<dbReference type="GO" id="GO:0004055">
    <property type="term" value="F:argininosuccinate synthase activity"/>
    <property type="evidence" value="ECO:0007669"/>
    <property type="project" value="UniProtKB-UniRule"/>
</dbReference>
<dbReference type="GO" id="GO:0005524">
    <property type="term" value="F:ATP binding"/>
    <property type="evidence" value="ECO:0007669"/>
    <property type="project" value="UniProtKB-UniRule"/>
</dbReference>
<dbReference type="GO" id="GO:0000053">
    <property type="term" value="P:argininosuccinate metabolic process"/>
    <property type="evidence" value="ECO:0007669"/>
    <property type="project" value="TreeGrafter"/>
</dbReference>
<dbReference type="GO" id="GO:0006526">
    <property type="term" value="P:L-arginine biosynthetic process"/>
    <property type="evidence" value="ECO:0007669"/>
    <property type="project" value="UniProtKB-UniRule"/>
</dbReference>
<dbReference type="GO" id="GO:0000050">
    <property type="term" value="P:urea cycle"/>
    <property type="evidence" value="ECO:0007669"/>
    <property type="project" value="TreeGrafter"/>
</dbReference>
<dbReference type="CDD" id="cd01999">
    <property type="entry name" value="ASS"/>
    <property type="match status" value="1"/>
</dbReference>
<dbReference type="FunFam" id="3.40.50.620:FF:000038">
    <property type="entry name" value="Argininosuccinate synthase"/>
    <property type="match status" value="1"/>
</dbReference>
<dbReference type="FunFam" id="3.90.1260.10:FF:000007">
    <property type="entry name" value="Argininosuccinate synthase"/>
    <property type="match status" value="1"/>
</dbReference>
<dbReference type="Gene3D" id="3.90.1260.10">
    <property type="entry name" value="Argininosuccinate synthetase, chain A, domain 2"/>
    <property type="match status" value="1"/>
</dbReference>
<dbReference type="Gene3D" id="3.40.50.620">
    <property type="entry name" value="HUPs"/>
    <property type="match status" value="1"/>
</dbReference>
<dbReference type="Gene3D" id="1.20.5.470">
    <property type="entry name" value="Single helix bin"/>
    <property type="match status" value="1"/>
</dbReference>
<dbReference type="HAMAP" id="MF_00005">
    <property type="entry name" value="Arg_succ_synth_type1"/>
    <property type="match status" value="1"/>
</dbReference>
<dbReference type="InterPro" id="IPR048268">
    <property type="entry name" value="Arginosuc_syn_C"/>
</dbReference>
<dbReference type="InterPro" id="IPR048267">
    <property type="entry name" value="Arginosuc_syn_N"/>
</dbReference>
<dbReference type="InterPro" id="IPR001518">
    <property type="entry name" value="Arginosuc_synth"/>
</dbReference>
<dbReference type="InterPro" id="IPR018223">
    <property type="entry name" value="Arginosuc_synth_CS"/>
</dbReference>
<dbReference type="InterPro" id="IPR023434">
    <property type="entry name" value="Arginosuc_synth_type_1_subfam"/>
</dbReference>
<dbReference type="InterPro" id="IPR024074">
    <property type="entry name" value="AS_cat/multimer_dom_body"/>
</dbReference>
<dbReference type="InterPro" id="IPR014729">
    <property type="entry name" value="Rossmann-like_a/b/a_fold"/>
</dbReference>
<dbReference type="NCBIfam" id="TIGR00032">
    <property type="entry name" value="argG"/>
    <property type="match status" value="1"/>
</dbReference>
<dbReference type="NCBIfam" id="NF001770">
    <property type="entry name" value="PRK00509.1"/>
    <property type="match status" value="1"/>
</dbReference>
<dbReference type="PANTHER" id="PTHR11587">
    <property type="entry name" value="ARGININOSUCCINATE SYNTHASE"/>
    <property type="match status" value="1"/>
</dbReference>
<dbReference type="PANTHER" id="PTHR11587:SF2">
    <property type="entry name" value="ARGININOSUCCINATE SYNTHASE"/>
    <property type="match status" value="1"/>
</dbReference>
<dbReference type="Pfam" id="PF20979">
    <property type="entry name" value="Arginosuc_syn_C"/>
    <property type="match status" value="1"/>
</dbReference>
<dbReference type="Pfam" id="PF00764">
    <property type="entry name" value="Arginosuc_synth"/>
    <property type="match status" value="1"/>
</dbReference>
<dbReference type="SUPFAM" id="SSF52402">
    <property type="entry name" value="Adenine nucleotide alpha hydrolases-like"/>
    <property type="match status" value="1"/>
</dbReference>
<dbReference type="SUPFAM" id="SSF69864">
    <property type="entry name" value="Argininosuccinate synthetase, C-terminal domain"/>
    <property type="match status" value="1"/>
</dbReference>
<dbReference type="PROSITE" id="PS00564">
    <property type="entry name" value="ARGININOSUCCIN_SYN_1"/>
    <property type="match status" value="1"/>
</dbReference>
<dbReference type="PROSITE" id="PS00565">
    <property type="entry name" value="ARGININOSUCCIN_SYN_2"/>
    <property type="match status" value="1"/>
</dbReference>
<evidence type="ECO:0000255" key="1">
    <source>
        <dbReference type="HAMAP-Rule" id="MF_00005"/>
    </source>
</evidence>
<feature type="chain" id="PRO_0000263916" description="Argininosuccinate synthase">
    <location>
        <begin position="1"/>
        <end position="398"/>
    </location>
</feature>
<feature type="binding site" evidence="1">
    <location>
        <begin position="8"/>
        <end position="16"/>
    </location>
    <ligand>
        <name>ATP</name>
        <dbReference type="ChEBI" id="CHEBI:30616"/>
    </ligand>
</feature>
<feature type="binding site" evidence="1">
    <location>
        <position position="87"/>
    </location>
    <ligand>
        <name>L-citrulline</name>
        <dbReference type="ChEBI" id="CHEBI:57743"/>
    </ligand>
</feature>
<feature type="binding site" evidence="1">
    <location>
        <position position="117"/>
    </location>
    <ligand>
        <name>ATP</name>
        <dbReference type="ChEBI" id="CHEBI:30616"/>
    </ligand>
</feature>
<feature type="binding site" evidence="1">
    <location>
        <position position="119"/>
    </location>
    <ligand>
        <name>L-aspartate</name>
        <dbReference type="ChEBI" id="CHEBI:29991"/>
    </ligand>
</feature>
<feature type="binding site" evidence="1">
    <location>
        <position position="123"/>
    </location>
    <ligand>
        <name>L-aspartate</name>
        <dbReference type="ChEBI" id="CHEBI:29991"/>
    </ligand>
</feature>
<feature type="binding site" evidence="1">
    <location>
        <position position="123"/>
    </location>
    <ligand>
        <name>L-citrulline</name>
        <dbReference type="ChEBI" id="CHEBI:57743"/>
    </ligand>
</feature>
<feature type="binding site" evidence="1">
    <location>
        <position position="124"/>
    </location>
    <ligand>
        <name>L-aspartate</name>
        <dbReference type="ChEBI" id="CHEBI:29991"/>
    </ligand>
</feature>
<feature type="binding site" evidence="1">
    <location>
        <position position="127"/>
    </location>
    <ligand>
        <name>L-citrulline</name>
        <dbReference type="ChEBI" id="CHEBI:57743"/>
    </ligand>
</feature>
<feature type="binding site" evidence="1">
    <location>
        <position position="175"/>
    </location>
    <ligand>
        <name>L-citrulline</name>
        <dbReference type="ChEBI" id="CHEBI:57743"/>
    </ligand>
</feature>
<feature type="binding site" evidence="1">
    <location>
        <position position="259"/>
    </location>
    <ligand>
        <name>L-citrulline</name>
        <dbReference type="ChEBI" id="CHEBI:57743"/>
    </ligand>
</feature>
<feature type="binding site" evidence="1">
    <location>
        <position position="271"/>
    </location>
    <ligand>
        <name>L-citrulline</name>
        <dbReference type="ChEBI" id="CHEBI:57743"/>
    </ligand>
</feature>
<comment type="catalytic activity">
    <reaction evidence="1">
        <text>L-citrulline + L-aspartate + ATP = 2-(N(omega)-L-arginino)succinate + AMP + diphosphate + H(+)</text>
        <dbReference type="Rhea" id="RHEA:10932"/>
        <dbReference type="ChEBI" id="CHEBI:15378"/>
        <dbReference type="ChEBI" id="CHEBI:29991"/>
        <dbReference type="ChEBI" id="CHEBI:30616"/>
        <dbReference type="ChEBI" id="CHEBI:33019"/>
        <dbReference type="ChEBI" id="CHEBI:57472"/>
        <dbReference type="ChEBI" id="CHEBI:57743"/>
        <dbReference type="ChEBI" id="CHEBI:456215"/>
        <dbReference type="EC" id="6.3.4.5"/>
    </reaction>
</comment>
<comment type="pathway">
    <text evidence="1">Amino-acid biosynthesis; L-arginine biosynthesis; L-arginine from L-ornithine and carbamoyl phosphate: step 2/3.</text>
</comment>
<comment type="subunit">
    <text evidence="1">Homotetramer.</text>
</comment>
<comment type="subcellular location">
    <subcellularLocation>
        <location evidence="1">Cytoplasm</location>
    </subcellularLocation>
</comment>
<comment type="similarity">
    <text evidence="1">Belongs to the argininosuccinate synthase family. Type 1 subfamily.</text>
</comment>
<gene>
    <name evidence="1" type="primary">argG</name>
    <name type="ordered locus">jk0847</name>
</gene>
<name>ASSY_CORJK</name>
<organism>
    <name type="scientific">Corynebacterium jeikeium (strain K411)</name>
    <dbReference type="NCBI Taxonomy" id="306537"/>
    <lineage>
        <taxon>Bacteria</taxon>
        <taxon>Bacillati</taxon>
        <taxon>Actinomycetota</taxon>
        <taxon>Actinomycetes</taxon>
        <taxon>Mycobacteriales</taxon>
        <taxon>Corynebacteriaceae</taxon>
        <taxon>Corynebacterium</taxon>
    </lineage>
</organism>
<reference key="1">
    <citation type="journal article" date="2005" name="J. Bacteriol.">
        <title>Complete genome sequence and analysis of the multiresistant nosocomial pathogen Corynebacterium jeikeium K411, a lipid-requiring bacterium of the human skin flora.</title>
        <authorList>
            <person name="Tauch A."/>
            <person name="Kaiser O."/>
            <person name="Hain T."/>
            <person name="Goesmann A."/>
            <person name="Weisshaar B."/>
            <person name="Albersmeier A."/>
            <person name="Bekel T."/>
            <person name="Bischoff N."/>
            <person name="Brune I."/>
            <person name="Chakraborty T."/>
            <person name="Kalinowski J."/>
            <person name="Meyer F."/>
            <person name="Rupp O."/>
            <person name="Schneiker S."/>
            <person name="Viehoever P."/>
            <person name="Puehler A."/>
        </authorList>
    </citation>
    <scope>NUCLEOTIDE SEQUENCE [LARGE SCALE GENOMIC DNA]</scope>
    <source>
        <strain>K411</strain>
    </source>
</reference>